<accession>B2TUP0</accession>
<name>ATPD_SHIB3</name>
<organism>
    <name type="scientific">Shigella boydii serotype 18 (strain CDC 3083-94 / BS512)</name>
    <dbReference type="NCBI Taxonomy" id="344609"/>
    <lineage>
        <taxon>Bacteria</taxon>
        <taxon>Pseudomonadati</taxon>
        <taxon>Pseudomonadota</taxon>
        <taxon>Gammaproteobacteria</taxon>
        <taxon>Enterobacterales</taxon>
        <taxon>Enterobacteriaceae</taxon>
        <taxon>Shigella</taxon>
    </lineage>
</organism>
<evidence type="ECO:0000255" key="1">
    <source>
        <dbReference type="HAMAP-Rule" id="MF_01416"/>
    </source>
</evidence>
<gene>
    <name evidence="1" type="primary">atpH</name>
    <name type="ordered locus">SbBS512_E4186</name>
</gene>
<reference key="1">
    <citation type="submission" date="2008-05" db="EMBL/GenBank/DDBJ databases">
        <title>Complete sequence of Shigella boydii serotype 18 strain BS512.</title>
        <authorList>
            <person name="Rasko D.A."/>
            <person name="Rosovitz M."/>
            <person name="Maurelli A.T."/>
            <person name="Myers G."/>
            <person name="Seshadri R."/>
            <person name="Cer R."/>
            <person name="Jiang L."/>
            <person name="Ravel J."/>
            <person name="Sebastian Y."/>
        </authorList>
    </citation>
    <scope>NUCLEOTIDE SEQUENCE [LARGE SCALE GENOMIC DNA]</scope>
    <source>
        <strain>CDC 3083-94 / BS512</strain>
    </source>
</reference>
<comment type="function">
    <text evidence="1">F(1)F(0) ATP synthase produces ATP from ADP in the presence of a proton or sodium gradient. F-type ATPases consist of two structural domains, F(1) containing the extramembraneous catalytic core and F(0) containing the membrane proton channel, linked together by a central stalk and a peripheral stalk. During catalysis, ATP synthesis in the catalytic domain of F(1) is coupled via a rotary mechanism of the central stalk subunits to proton translocation.</text>
</comment>
<comment type="function">
    <text evidence="1">This protein is part of the stalk that links CF(0) to CF(1). It either transmits conformational changes from CF(0) to CF(1) or is implicated in proton conduction.</text>
</comment>
<comment type="subunit">
    <text evidence="1">F-type ATPases have 2 components, F(1) - the catalytic core - and F(0) - the membrane proton channel. F(1) has five subunits: alpha(3), beta(3), gamma(1), delta(1), epsilon(1). F(0) has three main subunits: a(1), b(2) and c(10-14). The alpha and beta chains form an alternating ring which encloses part of the gamma chain. F(1) is attached to F(0) by a central stalk formed by the gamma and epsilon chains, while a peripheral stalk is formed by the delta and b chains.</text>
</comment>
<comment type="subcellular location">
    <subcellularLocation>
        <location evidence="1">Cell inner membrane</location>
        <topology evidence="1">Peripheral membrane protein</topology>
    </subcellularLocation>
</comment>
<comment type="similarity">
    <text evidence="1">Belongs to the ATPase delta chain family.</text>
</comment>
<protein>
    <recommendedName>
        <fullName evidence="1">ATP synthase subunit delta</fullName>
    </recommendedName>
    <alternativeName>
        <fullName evidence="1">ATP synthase F(1) sector subunit delta</fullName>
    </alternativeName>
    <alternativeName>
        <fullName evidence="1">F-type ATPase subunit delta</fullName>
        <shortName evidence="1">F-ATPase subunit delta</shortName>
    </alternativeName>
</protein>
<proteinExistence type="inferred from homology"/>
<feature type="chain" id="PRO_0000371138" description="ATP synthase subunit delta">
    <location>
        <begin position="1"/>
        <end position="177"/>
    </location>
</feature>
<keyword id="KW-0066">ATP synthesis</keyword>
<keyword id="KW-0997">Cell inner membrane</keyword>
<keyword id="KW-1003">Cell membrane</keyword>
<keyword id="KW-0139">CF(1)</keyword>
<keyword id="KW-0375">Hydrogen ion transport</keyword>
<keyword id="KW-0406">Ion transport</keyword>
<keyword id="KW-0472">Membrane</keyword>
<keyword id="KW-1185">Reference proteome</keyword>
<keyword id="KW-0813">Transport</keyword>
<dbReference type="EMBL" id="CP001063">
    <property type="protein sequence ID" value="ACD08197.1"/>
    <property type="molecule type" value="Genomic_DNA"/>
</dbReference>
<dbReference type="RefSeq" id="WP_001288587.1">
    <property type="nucleotide sequence ID" value="NC_010658.1"/>
</dbReference>
<dbReference type="SMR" id="B2TUP0"/>
<dbReference type="STRING" id="344609.SbBS512_E4186"/>
<dbReference type="GeneID" id="93778232"/>
<dbReference type="KEGG" id="sbc:SbBS512_E4186"/>
<dbReference type="HOGENOM" id="CLU_085114_3_0_6"/>
<dbReference type="Proteomes" id="UP000001030">
    <property type="component" value="Chromosome"/>
</dbReference>
<dbReference type="GO" id="GO:0005886">
    <property type="term" value="C:plasma membrane"/>
    <property type="evidence" value="ECO:0007669"/>
    <property type="project" value="UniProtKB-SubCell"/>
</dbReference>
<dbReference type="GO" id="GO:0045259">
    <property type="term" value="C:proton-transporting ATP synthase complex"/>
    <property type="evidence" value="ECO:0007669"/>
    <property type="project" value="UniProtKB-KW"/>
</dbReference>
<dbReference type="GO" id="GO:0046933">
    <property type="term" value="F:proton-transporting ATP synthase activity, rotational mechanism"/>
    <property type="evidence" value="ECO:0007669"/>
    <property type="project" value="UniProtKB-UniRule"/>
</dbReference>
<dbReference type="FunFam" id="1.10.520.20:FF:000001">
    <property type="entry name" value="ATP synthase subunit delta"/>
    <property type="match status" value="1"/>
</dbReference>
<dbReference type="Gene3D" id="1.10.520.20">
    <property type="entry name" value="N-terminal domain of the delta subunit of the F1F0-ATP synthase"/>
    <property type="match status" value="1"/>
</dbReference>
<dbReference type="HAMAP" id="MF_01416">
    <property type="entry name" value="ATP_synth_delta_bact"/>
    <property type="match status" value="1"/>
</dbReference>
<dbReference type="InterPro" id="IPR026015">
    <property type="entry name" value="ATP_synth_OSCP/delta_N_sf"/>
</dbReference>
<dbReference type="InterPro" id="IPR020781">
    <property type="entry name" value="ATPase_OSCP/d_CS"/>
</dbReference>
<dbReference type="InterPro" id="IPR000711">
    <property type="entry name" value="ATPase_OSCP/dsu"/>
</dbReference>
<dbReference type="NCBIfam" id="TIGR01145">
    <property type="entry name" value="ATP_synt_delta"/>
    <property type="match status" value="1"/>
</dbReference>
<dbReference type="NCBIfam" id="NF004402">
    <property type="entry name" value="PRK05758.2-2"/>
    <property type="match status" value="1"/>
</dbReference>
<dbReference type="NCBIfam" id="NF004404">
    <property type="entry name" value="PRK05758.2-5"/>
    <property type="match status" value="1"/>
</dbReference>
<dbReference type="PANTHER" id="PTHR11910">
    <property type="entry name" value="ATP SYNTHASE DELTA CHAIN"/>
    <property type="match status" value="1"/>
</dbReference>
<dbReference type="Pfam" id="PF00213">
    <property type="entry name" value="OSCP"/>
    <property type="match status" value="1"/>
</dbReference>
<dbReference type="PRINTS" id="PR00125">
    <property type="entry name" value="ATPASEDELTA"/>
</dbReference>
<dbReference type="SUPFAM" id="SSF47928">
    <property type="entry name" value="N-terminal domain of the delta subunit of the F1F0-ATP synthase"/>
    <property type="match status" value="1"/>
</dbReference>
<dbReference type="PROSITE" id="PS00389">
    <property type="entry name" value="ATPASE_DELTA"/>
    <property type="match status" value="1"/>
</dbReference>
<sequence length="177" mass="19332">MSEFITVARPYAKAAFDFAVEHQSVERWQDMLAFAAEVTKNEQMAELLSGALAPETLAESFIAVCGEQLDENGQNLIRVMAENGRLNALPDVLEQFIHLRAVSEATAEVDVISAAALSEQQLAKISAAMEKRLSRKVKLNCKIDKSVMAGVIIRAGDMVIDGSVRGRLERLADVLQS</sequence>